<keyword id="KW-0997">Cell inner membrane</keyword>
<keyword id="KW-1003">Cell membrane</keyword>
<keyword id="KW-0472">Membrane</keyword>
<keyword id="KW-0812">Transmembrane</keyword>
<keyword id="KW-1133">Transmembrane helix</keyword>
<organism>
    <name type="scientific">Salmonella gallinarum (strain 287/91 / NCTC 13346)</name>
    <dbReference type="NCBI Taxonomy" id="550538"/>
    <lineage>
        <taxon>Bacteria</taxon>
        <taxon>Pseudomonadati</taxon>
        <taxon>Pseudomonadota</taxon>
        <taxon>Gammaproteobacteria</taxon>
        <taxon>Enterobacterales</taxon>
        <taxon>Enterobacteriaceae</taxon>
        <taxon>Salmonella</taxon>
    </lineage>
</organism>
<name>YNFA_SALG2</name>
<accession>B5RAG1</accession>
<protein>
    <recommendedName>
        <fullName evidence="1">UPF0060 membrane protein YnfA</fullName>
    </recommendedName>
</protein>
<reference key="1">
    <citation type="journal article" date="2008" name="Genome Res.">
        <title>Comparative genome analysis of Salmonella enteritidis PT4 and Salmonella gallinarum 287/91 provides insights into evolutionary and host adaptation pathways.</title>
        <authorList>
            <person name="Thomson N.R."/>
            <person name="Clayton D.J."/>
            <person name="Windhorst D."/>
            <person name="Vernikos G."/>
            <person name="Davidson S."/>
            <person name="Churcher C."/>
            <person name="Quail M.A."/>
            <person name="Stevens M."/>
            <person name="Jones M.A."/>
            <person name="Watson M."/>
            <person name="Barron A."/>
            <person name="Layton A."/>
            <person name="Pickard D."/>
            <person name="Kingsley R.A."/>
            <person name="Bignell A."/>
            <person name="Clark L."/>
            <person name="Harris B."/>
            <person name="Ormond D."/>
            <person name="Abdellah Z."/>
            <person name="Brooks K."/>
            <person name="Cherevach I."/>
            <person name="Chillingworth T."/>
            <person name="Woodward J."/>
            <person name="Norberczak H."/>
            <person name="Lord A."/>
            <person name="Arrowsmith C."/>
            <person name="Jagels K."/>
            <person name="Moule S."/>
            <person name="Mungall K."/>
            <person name="Saunders M."/>
            <person name="Whitehead S."/>
            <person name="Chabalgoity J.A."/>
            <person name="Maskell D."/>
            <person name="Humphreys T."/>
            <person name="Roberts M."/>
            <person name="Barrow P.A."/>
            <person name="Dougan G."/>
            <person name="Parkhill J."/>
        </authorList>
    </citation>
    <scope>NUCLEOTIDE SEQUENCE [LARGE SCALE GENOMIC DNA]</scope>
    <source>
        <strain>287/91 / NCTC 13346</strain>
    </source>
</reference>
<comment type="subcellular location">
    <subcellularLocation>
        <location evidence="1">Cell inner membrane</location>
        <topology evidence="1">Multi-pass membrane protein</topology>
    </subcellularLocation>
</comment>
<comment type="similarity">
    <text evidence="1">Belongs to the UPF0060 family.</text>
</comment>
<evidence type="ECO:0000255" key="1">
    <source>
        <dbReference type="HAMAP-Rule" id="MF_00010"/>
    </source>
</evidence>
<feature type="chain" id="PRO_1000089257" description="UPF0060 membrane protein YnfA">
    <location>
        <begin position="1"/>
        <end position="108"/>
    </location>
</feature>
<feature type="topological domain" description="Periplasmic" evidence="1">
    <location>
        <begin position="1"/>
        <end position="5"/>
    </location>
</feature>
<feature type="transmembrane region" description="Helical" evidence="1">
    <location>
        <begin position="6"/>
        <end position="26"/>
    </location>
</feature>
<feature type="topological domain" description="Cytoplasmic" evidence="1">
    <location>
        <begin position="27"/>
        <end position="30"/>
    </location>
</feature>
<feature type="transmembrane region" description="Helical" evidence="1">
    <location>
        <begin position="31"/>
        <end position="51"/>
    </location>
</feature>
<feature type="topological domain" description="Periplasmic" evidence="1">
    <location>
        <begin position="52"/>
        <end position="60"/>
    </location>
</feature>
<feature type="transmembrane region" description="Helical" evidence="1">
    <location>
        <begin position="61"/>
        <end position="81"/>
    </location>
</feature>
<feature type="topological domain" description="Cytoplasmic" evidence="1">
    <location>
        <begin position="82"/>
        <end position="84"/>
    </location>
</feature>
<feature type="transmembrane region" description="Helical" evidence="1">
    <location>
        <begin position="85"/>
        <end position="105"/>
    </location>
</feature>
<feature type="topological domain" description="Periplasmic" evidence="1">
    <location>
        <begin position="106"/>
        <end position="108"/>
    </location>
</feature>
<sequence>MLKTTLLFFVTALCEIIGCFLPWLWLKRGASVWWLLPAAASLALFVWLLTLHPAASGRVYAAYGGVYVCTALLWLRVVDGVRLTVYDWCGALIALCGMLIIVVGWGRT</sequence>
<dbReference type="EMBL" id="AM933173">
    <property type="protein sequence ID" value="CAR37476.1"/>
    <property type="molecule type" value="Genomic_DNA"/>
</dbReference>
<dbReference type="RefSeq" id="WP_000921389.1">
    <property type="nucleotide sequence ID" value="NC_011274.1"/>
</dbReference>
<dbReference type="SMR" id="B5RAG1"/>
<dbReference type="KEGG" id="seg:SG1616"/>
<dbReference type="HOGENOM" id="CLU_117653_2_1_6"/>
<dbReference type="Proteomes" id="UP000008321">
    <property type="component" value="Chromosome"/>
</dbReference>
<dbReference type="GO" id="GO:0005886">
    <property type="term" value="C:plasma membrane"/>
    <property type="evidence" value="ECO:0007669"/>
    <property type="project" value="UniProtKB-SubCell"/>
</dbReference>
<dbReference type="HAMAP" id="MF_00010">
    <property type="entry name" value="UPF0060"/>
    <property type="match status" value="1"/>
</dbReference>
<dbReference type="InterPro" id="IPR003844">
    <property type="entry name" value="UPF0060"/>
</dbReference>
<dbReference type="NCBIfam" id="NF002586">
    <property type="entry name" value="PRK02237.1"/>
    <property type="match status" value="1"/>
</dbReference>
<dbReference type="PANTHER" id="PTHR36116">
    <property type="entry name" value="UPF0060 MEMBRANE PROTEIN YNFA"/>
    <property type="match status" value="1"/>
</dbReference>
<dbReference type="PANTHER" id="PTHR36116:SF1">
    <property type="entry name" value="UPF0060 MEMBRANE PROTEIN YNFA"/>
    <property type="match status" value="1"/>
</dbReference>
<dbReference type="Pfam" id="PF02694">
    <property type="entry name" value="UPF0060"/>
    <property type="match status" value="1"/>
</dbReference>
<dbReference type="SUPFAM" id="SSF103481">
    <property type="entry name" value="Multidrug resistance efflux transporter EmrE"/>
    <property type="match status" value="1"/>
</dbReference>
<proteinExistence type="inferred from homology"/>
<gene>
    <name evidence="1" type="primary">ynfA</name>
    <name type="ordered locus">SG1616</name>
</gene>